<keyword id="KW-0028">Amino-acid biosynthesis</keyword>
<keyword id="KW-0057">Aromatic amino acid biosynthesis</keyword>
<keyword id="KW-0274">FAD</keyword>
<keyword id="KW-0285">Flavoprotein</keyword>
<keyword id="KW-0288">FMN</keyword>
<keyword id="KW-0456">Lyase</keyword>
<keyword id="KW-0521">NADP</keyword>
<gene>
    <name evidence="1" type="primary">aroC</name>
    <name type="ordered locus">XF_1369</name>
</gene>
<dbReference type="EC" id="4.2.3.5" evidence="1"/>
<dbReference type="EMBL" id="AE003849">
    <property type="protein sequence ID" value="AAF84178.1"/>
    <property type="status" value="ALT_INIT"/>
    <property type="molecule type" value="Genomic_DNA"/>
</dbReference>
<dbReference type="PIR" id="E82690">
    <property type="entry name" value="E82690"/>
</dbReference>
<dbReference type="RefSeq" id="WP_023906755.1">
    <property type="nucleotide sequence ID" value="NC_002488.3"/>
</dbReference>
<dbReference type="SMR" id="Q9PDL0"/>
<dbReference type="STRING" id="160492.XF_1369"/>
<dbReference type="KEGG" id="xfa:XF_1369"/>
<dbReference type="eggNOG" id="COG0082">
    <property type="taxonomic scope" value="Bacteria"/>
</dbReference>
<dbReference type="HOGENOM" id="CLU_034547_0_2_6"/>
<dbReference type="UniPathway" id="UPA00053">
    <property type="reaction ID" value="UER00090"/>
</dbReference>
<dbReference type="Proteomes" id="UP000000812">
    <property type="component" value="Chromosome"/>
</dbReference>
<dbReference type="GO" id="GO:0005829">
    <property type="term" value="C:cytosol"/>
    <property type="evidence" value="ECO:0007669"/>
    <property type="project" value="TreeGrafter"/>
</dbReference>
<dbReference type="GO" id="GO:0004107">
    <property type="term" value="F:chorismate synthase activity"/>
    <property type="evidence" value="ECO:0007669"/>
    <property type="project" value="UniProtKB-UniRule"/>
</dbReference>
<dbReference type="GO" id="GO:0010181">
    <property type="term" value="F:FMN binding"/>
    <property type="evidence" value="ECO:0007669"/>
    <property type="project" value="TreeGrafter"/>
</dbReference>
<dbReference type="GO" id="GO:0008652">
    <property type="term" value="P:amino acid biosynthetic process"/>
    <property type="evidence" value="ECO:0007669"/>
    <property type="project" value="UniProtKB-KW"/>
</dbReference>
<dbReference type="GO" id="GO:0009073">
    <property type="term" value="P:aromatic amino acid family biosynthetic process"/>
    <property type="evidence" value="ECO:0007669"/>
    <property type="project" value="UniProtKB-KW"/>
</dbReference>
<dbReference type="GO" id="GO:0009423">
    <property type="term" value="P:chorismate biosynthetic process"/>
    <property type="evidence" value="ECO:0007669"/>
    <property type="project" value="UniProtKB-UniRule"/>
</dbReference>
<dbReference type="CDD" id="cd07304">
    <property type="entry name" value="Chorismate_synthase"/>
    <property type="match status" value="1"/>
</dbReference>
<dbReference type="FunFam" id="3.60.150.10:FF:000001">
    <property type="entry name" value="Chorismate synthase"/>
    <property type="match status" value="1"/>
</dbReference>
<dbReference type="Gene3D" id="3.60.150.10">
    <property type="entry name" value="Chorismate synthase AroC"/>
    <property type="match status" value="1"/>
</dbReference>
<dbReference type="HAMAP" id="MF_00300">
    <property type="entry name" value="Chorismate_synth"/>
    <property type="match status" value="1"/>
</dbReference>
<dbReference type="InterPro" id="IPR000453">
    <property type="entry name" value="Chorismate_synth"/>
</dbReference>
<dbReference type="InterPro" id="IPR035904">
    <property type="entry name" value="Chorismate_synth_AroC_sf"/>
</dbReference>
<dbReference type="InterPro" id="IPR020541">
    <property type="entry name" value="Chorismate_synthase_CS"/>
</dbReference>
<dbReference type="NCBIfam" id="TIGR00033">
    <property type="entry name" value="aroC"/>
    <property type="match status" value="1"/>
</dbReference>
<dbReference type="NCBIfam" id="NF003793">
    <property type="entry name" value="PRK05382.1"/>
    <property type="match status" value="1"/>
</dbReference>
<dbReference type="PANTHER" id="PTHR21085">
    <property type="entry name" value="CHORISMATE SYNTHASE"/>
    <property type="match status" value="1"/>
</dbReference>
<dbReference type="PANTHER" id="PTHR21085:SF0">
    <property type="entry name" value="CHORISMATE SYNTHASE"/>
    <property type="match status" value="1"/>
</dbReference>
<dbReference type="Pfam" id="PF01264">
    <property type="entry name" value="Chorismate_synt"/>
    <property type="match status" value="1"/>
</dbReference>
<dbReference type="PIRSF" id="PIRSF001456">
    <property type="entry name" value="Chorismate_synth"/>
    <property type="match status" value="1"/>
</dbReference>
<dbReference type="SUPFAM" id="SSF103263">
    <property type="entry name" value="Chorismate synthase, AroC"/>
    <property type="match status" value="1"/>
</dbReference>
<dbReference type="PROSITE" id="PS00787">
    <property type="entry name" value="CHORISMATE_SYNTHASE_1"/>
    <property type="match status" value="1"/>
</dbReference>
<dbReference type="PROSITE" id="PS00788">
    <property type="entry name" value="CHORISMATE_SYNTHASE_2"/>
    <property type="match status" value="1"/>
</dbReference>
<dbReference type="PROSITE" id="PS00789">
    <property type="entry name" value="CHORISMATE_SYNTHASE_3"/>
    <property type="match status" value="1"/>
</dbReference>
<sequence>MGANTFGKLLAVTTFGESHGPAIGCVIDGCPPGLELAAEEFAHDLQRRATGRSRHTSARREADEVEILSGVYEGRTTGTPIALLIRNTDQRSKDYATIARQFRPGHADYTYWQKYGIRDPRGGGRSSARETTMRVAAGVVAKKWLKQRYGVIVRGFLSQLGEIRPEGFAWDAVEDNPFFWPQAAQVPELEAYMDALRKSGNSVGARVDVVAEGVPPGWGEPIYGKLDGELAAALMSINAVKGVEIGAGFGSTVQKGTEHRDLMTPLGFLSNHAGGIIGGITTGQPIIVSIALKPTSSLRLPGETVDVDGHPVQVITKGRHDPCVGIRAPPIAEAMVALVLMDQALRHRAQCGDVGEMSPCILENVGFRNADD</sequence>
<accession>Q9PDL0</accession>
<protein>
    <recommendedName>
        <fullName evidence="1">Chorismate synthase</fullName>
        <shortName evidence="1">CS</shortName>
        <ecNumber evidence="1">4.2.3.5</ecNumber>
    </recommendedName>
    <alternativeName>
        <fullName evidence="1">5-enolpyruvylshikimate-3-phosphate phospholyase</fullName>
    </alternativeName>
</protein>
<reference key="1">
    <citation type="journal article" date="2000" name="Nature">
        <title>The genome sequence of the plant pathogen Xylella fastidiosa.</title>
        <authorList>
            <person name="Simpson A.J.G."/>
            <person name="Reinach F.C."/>
            <person name="Arruda P."/>
            <person name="Abreu F.A."/>
            <person name="Acencio M."/>
            <person name="Alvarenga R."/>
            <person name="Alves L.M.C."/>
            <person name="Araya J.E."/>
            <person name="Baia G.S."/>
            <person name="Baptista C.S."/>
            <person name="Barros M.H."/>
            <person name="Bonaccorsi E.D."/>
            <person name="Bordin S."/>
            <person name="Bove J.M."/>
            <person name="Briones M.R.S."/>
            <person name="Bueno M.R.P."/>
            <person name="Camargo A.A."/>
            <person name="Camargo L.E.A."/>
            <person name="Carraro D.M."/>
            <person name="Carrer H."/>
            <person name="Colauto N.B."/>
            <person name="Colombo C."/>
            <person name="Costa F.F."/>
            <person name="Costa M.C.R."/>
            <person name="Costa-Neto C.M."/>
            <person name="Coutinho L.L."/>
            <person name="Cristofani M."/>
            <person name="Dias-Neto E."/>
            <person name="Docena C."/>
            <person name="El-Dorry H."/>
            <person name="Facincani A.P."/>
            <person name="Ferreira A.J.S."/>
            <person name="Ferreira V.C.A."/>
            <person name="Ferro J.A."/>
            <person name="Fraga J.S."/>
            <person name="Franca S.C."/>
            <person name="Franco M.C."/>
            <person name="Frohme M."/>
            <person name="Furlan L.R."/>
            <person name="Garnier M."/>
            <person name="Goldman G.H."/>
            <person name="Goldman M.H.S."/>
            <person name="Gomes S.L."/>
            <person name="Gruber A."/>
            <person name="Ho P.L."/>
            <person name="Hoheisel J.D."/>
            <person name="Junqueira M.L."/>
            <person name="Kemper E.L."/>
            <person name="Kitajima J.P."/>
            <person name="Krieger J.E."/>
            <person name="Kuramae E.E."/>
            <person name="Laigret F."/>
            <person name="Lambais M.R."/>
            <person name="Leite L.C.C."/>
            <person name="Lemos E.G.M."/>
            <person name="Lemos M.V.F."/>
            <person name="Lopes S.A."/>
            <person name="Lopes C.R."/>
            <person name="Machado J.A."/>
            <person name="Machado M.A."/>
            <person name="Madeira A.M.B.N."/>
            <person name="Madeira H.M.F."/>
            <person name="Marino C.L."/>
            <person name="Marques M.V."/>
            <person name="Martins E.A.L."/>
            <person name="Martins E.M.F."/>
            <person name="Matsukuma A.Y."/>
            <person name="Menck C.F.M."/>
            <person name="Miracca E.C."/>
            <person name="Miyaki C.Y."/>
            <person name="Monteiro-Vitorello C.B."/>
            <person name="Moon D.H."/>
            <person name="Nagai M.A."/>
            <person name="Nascimento A.L.T.O."/>
            <person name="Netto L.E.S."/>
            <person name="Nhani A. Jr."/>
            <person name="Nobrega F.G."/>
            <person name="Nunes L.R."/>
            <person name="Oliveira M.A."/>
            <person name="de Oliveira M.C."/>
            <person name="de Oliveira R.C."/>
            <person name="Palmieri D.A."/>
            <person name="Paris A."/>
            <person name="Peixoto B.R."/>
            <person name="Pereira G.A.G."/>
            <person name="Pereira H.A. Jr."/>
            <person name="Pesquero J.B."/>
            <person name="Quaggio R.B."/>
            <person name="Roberto P.G."/>
            <person name="Rodrigues V."/>
            <person name="de Rosa A.J.M."/>
            <person name="de Rosa V.E. Jr."/>
            <person name="de Sa R.G."/>
            <person name="Santelli R.V."/>
            <person name="Sawasaki H.E."/>
            <person name="da Silva A.C.R."/>
            <person name="da Silva A.M."/>
            <person name="da Silva F.R."/>
            <person name="Silva W.A. Jr."/>
            <person name="da Silveira J.F."/>
            <person name="Silvestri M.L.Z."/>
            <person name="Siqueira W.J."/>
            <person name="de Souza A.A."/>
            <person name="de Souza A.P."/>
            <person name="Terenzi M.F."/>
            <person name="Truffi D."/>
            <person name="Tsai S.M."/>
            <person name="Tsuhako M.H."/>
            <person name="Vallada H."/>
            <person name="Van Sluys M.A."/>
            <person name="Verjovski-Almeida S."/>
            <person name="Vettore A.L."/>
            <person name="Zago M.A."/>
            <person name="Zatz M."/>
            <person name="Meidanis J."/>
            <person name="Setubal J.C."/>
        </authorList>
    </citation>
    <scope>NUCLEOTIDE SEQUENCE [LARGE SCALE GENOMIC DNA]</scope>
    <source>
        <strain>9a5c</strain>
    </source>
</reference>
<name>AROC_XYLFA</name>
<organism>
    <name type="scientific">Xylella fastidiosa (strain 9a5c)</name>
    <dbReference type="NCBI Taxonomy" id="160492"/>
    <lineage>
        <taxon>Bacteria</taxon>
        <taxon>Pseudomonadati</taxon>
        <taxon>Pseudomonadota</taxon>
        <taxon>Gammaproteobacteria</taxon>
        <taxon>Lysobacterales</taxon>
        <taxon>Lysobacteraceae</taxon>
        <taxon>Xylella</taxon>
    </lineage>
</organism>
<comment type="function">
    <text evidence="1">Catalyzes the anti-1,4-elimination of the C-3 phosphate and the C-6 proR hydrogen from 5-enolpyruvylshikimate-3-phosphate (EPSP) to yield chorismate, which is the branch point compound that serves as the starting substrate for the three terminal pathways of aromatic amino acid biosynthesis. This reaction introduces a second double bond into the aromatic ring system.</text>
</comment>
<comment type="catalytic activity">
    <reaction evidence="1">
        <text>5-O-(1-carboxyvinyl)-3-phosphoshikimate = chorismate + phosphate</text>
        <dbReference type="Rhea" id="RHEA:21020"/>
        <dbReference type="ChEBI" id="CHEBI:29748"/>
        <dbReference type="ChEBI" id="CHEBI:43474"/>
        <dbReference type="ChEBI" id="CHEBI:57701"/>
        <dbReference type="EC" id="4.2.3.5"/>
    </reaction>
</comment>
<comment type="cofactor">
    <cofactor evidence="1">
        <name>FMNH2</name>
        <dbReference type="ChEBI" id="CHEBI:57618"/>
    </cofactor>
    <text evidence="1">Reduced FMN (FMNH(2)).</text>
</comment>
<comment type="pathway">
    <text evidence="1">Metabolic intermediate biosynthesis; chorismate biosynthesis; chorismate from D-erythrose 4-phosphate and phosphoenolpyruvate: step 7/7.</text>
</comment>
<comment type="subunit">
    <text evidence="1">Homotetramer.</text>
</comment>
<comment type="similarity">
    <text evidence="1">Belongs to the chorismate synthase family.</text>
</comment>
<comment type="sequence caution" evidence="2">
    <conflict type="erroneous initiation">
        <sequence resource="EMBL-CDS" id="AAF84178"/>
    </conflict>
    <text>Extended N-terminus.</text>
</comment>
<proteinExistence type="inferred from homology"/>
<evidence type="ECO:0000255" key="1">
    <source>
        <dbReference type="HAMAP-Rule" id="MF_00300"/>
    </source>
</evidence>
<evidence type="ECO:0000305" key="2"/>
<feature type="chain" id="PRO_0000140681" description="Chorismate synthase">
    <location>
        <begin position="1"/>
        <end position="372"/>
    </location>
</feature>
<feature type="binding site" evidence="1">
    <location>
        <position position="48"/>
    </location>
    <ligand>
        <name>NADP(+)</name>
        <dbReference type="ChEBI" id="CHEBI:58349"/>
    </ligand>
</feature>
<feature type="binding site" evidence="1">
    <location>
        <position position="54"/>
    </location>
    <ligand>
        <name>NADP(+)</name>
        <dbReference type="ChEBI" id="CHEBI:58349"/>
    </ligand>
</feature>
<feature type="binding site" evidence="1">
    <location>
        <begin position="125"/>
        <end position="127"/>
    </location>
    <ligand>
        <name>FMN</name>
        <dbReference type="ChEBI" id="CHEBI:58210"/>
    </ligand>
</feature>
<feature type="binding site" evidence="1">
    <location>
        <begin position="238"/>
        <end position="239"/>
    </location>
    <ligand>
        <name>FMN</name>
        <dbReference type="ChEBI" id="CHEBI:58210"/>
    </ligand>
</feature>
<feature type="binding site" evidence="1">
    <location>
        <position position="278"/>
    </location>
    <ligand>
        <name>FMN</name>
        <dbReference type="ChEBI" id="CHEBI:58210"/>
    </ligand>
</feature>
<feature type="binding site" evidence="1">
    <location>
        <begin position="293"/>
        <end position="297"/>
    </location>
    <ligand>
        <name>FMN</name>
        <dbReference type="ChEBI" id="CHEBI:58210"/>
    </ligand>
</feature>
<feature type="binding site" evidence="1">
    <location>
        <position position="319"/>
    </location>
    <ligand>
        <name>FMN</name>
        <dbReference type="ChEBI" id="CHEBI:58210"/>
    </ligand>
</feature>